<organism>
    <name type="scientific">Escherichia coli O139:H28 (strain E24377A / ETEC)</name>
    <dbReference type="NCBI Taxonomy" id="331111"/>
    <lineage>
        <taxon>Bacteria</taxon>
        <taxon>Pseudomonadati</taxon>
        <taxon>Pseudomonadota</taxon>
        <taxon>Gammaproteobacteria</taxon>
        <taxon>Enterobacterales</taxon>
        <taxon>Enterobacteriaceae</taxon>
        <taxon>Escherichia</taxon>
    </lineage>
</organism>
<reference key="1">
    <citation type="journal article" date="2008" name="J. Bacteriol.">
        <title>The pangenome structure of Escherichia coli: comparative genomic analysis of E. coli commensal and pathogenic isolates.</title>
        <authorList>
            <person name="Rasko D.A."/>
            <person name="Rosovitz M.J."/>
            <person name="Myers G.S.A."/>
            <person name="Mongodin E.F."/>
            <person name="Fricke W.F."/>
            <person name="Gajer P."/>
            <person name="Crabtree J."/>
            <person name="Sebaihia M."/>
            <person name="Thomson N.R."/>
            <person name="Chaudhuri R."/>
            <person name="Henderson I.R."/>
            <person name="Sperandio V."/>
            <person name="Ravel J."/>
        </authorList>
    </citation>
    <scope>NUCLEOTIDE SEQUENCE [LARGE SCALE GENOMIC DNA]</scope>
    <source>
        <strain>E24377A / ETEC</strain>
    </source>
</reference>
<dbReference type="EMBL" id="CP000800">
    <property type="protein sequence ID" value="ABV21019.1"/>
    <property type="molecule type" value="Genomic_DNA"/>
</dbReference>
<dbReference type="RefSeq" id="WP_000246884.1">
    <property type="nucleotide sequence ID" value="NC_009801.1"/>
</dbReference>
<dbReference type="SMR" id="A7ZHQ9"/>
<dbReference type="GeneID" id="93777256"/>
<dbReference type="KEGG" id="ecw:EcE24377A_0173"/>
<dbReference type="HOGENOM" id="CLU_040318_1_2_6"/>
<dbReference type="Proteomes" id="UP000001122">
    <property type="component" value="Chromosome"/>
</dbReference>
<dbReference type="GO" id="GO:0022627">
    <property type="term" value="C:cytosolic small ribosomal subunit"/>
    <property type="evidence" value="ECO:0007669"/>
    <property type="project" value="TreeGrafter"/>
</dbReference>
<dbReference type="GO" id="GO:0003735">
    <property type="term" value="F:structural constituent of ribosome"/>
    <property type="evidence" value="ECO:0007669"/>
    <property type="project" value="InterPro"/>
</dbReference>
<dbReference type="GO" id="GO:0006412">
    <property type="term" value="P:translation"/>
    <property type="evidence" value="ECO:0007669"/>
    <property type="project" value="UniProtKB-UniRule"/>
</dbReference>
<dbReference type="CDD" id="cd01425">
    <property type="entry name" value="RPS2"/>
    <property type="match status" value="1"/>
</dbReference>
<dbReference type="FunFam" id="1.10.287.610:FF:000001">
    <property type="entry name" value="30S ribosomal protein S2"/>
    <property type="match status" value="1"/>
</dbReference>
<dbReference type="Gene3D" id="3.40.50.10490">
    <property type="entry name" value="Glucose-6-phosphate isomerase like protein, domain 1"/>
    <property type="match status" value="1"/>
</dbReference>
<dbReference type="Gene3D" id="1.10.287.610">
    <property type="entry name" value="Helix hairpin bin"/>
    <property type="match status" value="1"/>
</dbReference>
<dbReference type="HAMAP" id="MF_00291_B">
    <property type="entry name" value="Ribosomal_uS2_B"/>
    <property type="match status" value="1"/>
</dbReference>
<dbReference type="InterPro" id="IPR001865">
    <property type="entry name" value="Ribosomal_uS2"/>
</dbReference>
<dbReference type="InterPro" id="IPR005706">
    <property type="entry name" value="Ribosomal_uS2_bac/mit/plastid"/>
</dbReference>
<dbReference type="InterPro" id="IPR018130">
    <property type="entry name" value="Ribosomal_uS2_CS"/>
</dbReference>
<dbReference type="InterPro" id="IPR023591">
    <property type="entry name" value="Ribosomal_uS2_flav_dom_sf"/>
</dbReference>
<dbReference type="NCBIfam" id="TIGR01011">
    <property type="entry name" value="rpsB_bact"/>
    <property type="match status" value="1"/>
</dbReference>
<dbReference type="PANTHER" id="PTHR12534">
    <property type="entry name" value="30S RIBOSOMAL PROTEIN S2 PROKARYOTIC AND ORGANELLAR"/>
    <property type="match status" value="1"/>
</dbReference>
<dbReference type="PANTHER" id="PTHR12534:SF0">
    <property type="entry name" value="SMALL RIBOSOMAL SUBUNIT PROTEIN US2M"/>
    <property type="match status" value="1"/>
</dbReference>
<dbReference type="Pfam" id="PF00318">
    <property type="entry name" value="Ribosomal_S2"/>
    <property type="match status" value="1"/>
</dbReference>
<dbReference type="PRINTS" id="PR00395">
    <property type="entry name" value="RIBOSOMALS2"/>
</dbReference>
<dbReference type="SUPFAM" id="SSF52313">
    <property type="entry name" value="Ribosomal protein S2"/>
    <property type="match status" value="1"/>
</dbReference>
<dbReference type="PROSITE" id="PS00962">
    <property type="entry name" value="RIBOSOMAL_S2_1"/>
    <property type="match status" value="1"/>
</dbReference>
<dbReference type="PROSITE" id="PS00963">
    <property type="entry name" value="RIBOSOMAL_S2_2"/>
    <property type="match status" value="1"/>
</dbReference>
<evidence type="ECO:0000255" key="1">
    <source>
        <dbReference type="HAMAP-Rule" id="MF_00291"/>
    </source>
</evidence>
<evidence type="ECO:0000305" key="2"/>
<gene>
    <name evidence="1" type="primary">rpsB</name>
    <name type="ordered locus">EcE24377A_0173</name>
</gene>
<proteinExistence type="inferred from homology"/>
<name>RS2_ECO24</name>
<sequence>MATVSMRDMLKAGVHFGHQTRYWNPKMKPFIFGARNKVHIINLEKTVPMFNEALAELNKIASRKGKILFVGTKRAASEAVKDAALSCDQFFVNHRWLGGMLTNWKTVRQSIKRLKDLETQSQDGTFEKLTKKEALMRTRELEKLENSLGGIKDMGGLPDALFVIDADHEHIAIKEANNLGIPVFAIVDTNSDPDGVDFVIPGNDDAIRAVTLYLGAVAATVREGRSQDLASQAEESFVEAE</sequence>
<protein>
    <recommendedName>
        <fullName evidence="1">Small ribosomal subunit protein uS2</fullName>
    </recommendedName>
    <alternativeName>
        <fullName evidence="2">30S ribosomal protein S2</fullName>
    </alternativeName>
</protein>
<feature type="chain" id="PRO_1000059259" description="Small ribosomal subunit protein uS2">
    <location>
        <begin position="1"/>
        <end position="241"/>
    </location>
</feature>
<keyword id="KW-1185">Reference proteome</keyword>
<keyword id="KW-0687">Ribonucleoprotein</keyword>
<keyword id="KW-0689">Ribosomal protein</keyword>
<comment type="similarity">
    <text evidence="1">Belongs to the universal ribosomal protein uS2 family.</text>
</comment>
<accession>A7ZHQ9</accession>